<protein>
    <recommendedName>
        <fullName>Cyclin-dependent kinase 4 inhibitor C</fullName>
    </recommendedName>
    <alternativeName>
        <fullName>Cyclin-dependent kinase 6 inhibitor</fullName>
    </alternativeName>
    <alternativeName>
        <fullName>p18-INK4c</fullName>
    </alternativeName>
    <alternativeName>
        <fullName>p18-INK6</fullName>
    </alternativeName>
</protein>
<feature type="chain" id="PRO_0000144187" description="Cyclin-dependent kinase 4 inhibitor C">
    <location>
        <begin position="1"/>
        <end position="168"/>
    </location>
</feature>
<feature type="repeat" description="ANK 1">
    <location>
        <begin position="4"/>
        <end position="33"/>
    </location>
</feature>
<feature type="repeat" description="ANK 2">
    <location>
        <begin position="37"/>
        <end position="65"/>
    </location>
</feature>
<feature type="repeat" description="ANK 3">
    <location>
        <begin position="69"/>
        <end position="98"/>
    </location>
</feature>
<feature type="repeat" description="ANK 4">
    <location>
        <begin position="102"/>
        <end position="132"/>
    </location>
</feature>
<feature type="repeat" description="ANK 5">
    <location>
        <begin position="136"/>
        <end position="165"/>
    </location>
</feature>
<reference key="1">
    <citation type="journal article" date="1995" name="Mol. Cell. Biol.">
        <title>Novel INK4 proteins, p19 and p18, are specific inhibitors of the cyclin D-dependent kinases CDK4 and CDK6.</title>
        <authorList>
            <person name="Hirai H."/>
            <person name="Roussel M.F."/>
            <person name="Kato J.-Y."/>
            <person name="Ashmun R.A."/>
            <person name="Sherr C.J."/>
        </authorList>
    </citation>
    <scope>NUCLEOTIDE SEQUENCE [MRNA]</scope>
    <source>
        <strain>C57BL/Kaplan</strain>
    </source>
</reference>
<reference key="2">
    <citation type="journal article" date="2004" name="Genome Res.">
        <title>The status, quality, and expansion of the NIH full-length cDNA project: the Mammalian Gene Collection (MGC).</title>
        <authorList>
            <consortium name="The MGC Project Team"/>
        </authorList>
    </citation>
    <scope>NUCLEOTIDE SEQUENCE [LARGE SCALE MRNA]</scope>
    <source>
        <strain>FVB/N-3</strain>
        <tissue>Mammary gland</tissue>
    </source>
</reference>
<reference key="3">
    <citation type="journal article" date="2010" name="Cell">
        <title>A tissue-specific atlas of mouse protein phosphorylation and expression.</title>
        <authorList>
            <person name="Huttlin E.L."/>
            <person name="Jedrychowski M.P."/>
            <person name="Elias J.E."/>
            <person name="Goswami T."/>
            <person name="Rad R."/>
            <person name="Beausoleil S.A."/>
            <person name="Villen J."/>
            <person name="Haas W."/>
            <person name="Sowa M.E."/>
            <person name="Gygi S.P."/>
        </authorList>
    </citation>
    <scope>IDENTIFICATION BY MASS SPECTROMETRY [LARGE SCALE ANALYSIS]</scope>
    <source>
        <tissue>Liver</tissue>
        <tissue>Testis</tissue>
    </source>
</reference>
<name>CDN2C_MOUSE</name>
<keyword id="KW-0040">ANK repeat</keyword>
<keyword id="KW-0131">Cell cycle</keyword>
<keyword id="KW-1185">Reference proteome</keyword>
<keyword id="KW-0677">Repeat</keyword>
<accession>Q60772</accession>
<proteinExistence type="evidence at protein level"/>
<comment type="function">
    <text>Interacts strongly with CDK6, weakly with CDK4. Inhibits cell growth and proliferation with a correlated dependence on endogenous retinoblastoma protein RB.</text>
</comment>
<comment type="subunit">
    <text evidence="1">Heterodimer of p18 with CDK6.</text>
</comment>
<comment type="similarity">
    <text evidence="2">Belongs to the CDKN2 cyclin-dependent kinase inhibitor family.</text>
</comment>
<dbReference type="EMBL" id="U19596">
    <property type="protein sequence ID" value="AAC52193.1"/>
    <property type="molecule type" value="mRNA"/>
</dbReference>
<dbReference type="EMBL" id="BC027026">
    <property type="protein sequence ID" value="AAH27026.1"/>
    <property type="molecule type" value="mRNA"/>
</dbReference>
<dbReference type="CCDS" id="CCDS18467.1"/>
<dbReference type="PIR" id="B57379">
    <property type="entry name" value="B57379"/>
</dbReference>
<dbReference type="RefSeq" id="NP_001288297.1">
    <property type="nucleotide sequence ID" value="NM_001301368.2"/>
</dbReference>
<dbReference type="RefSeq" id="NP_031697.1">
    <property type="nucleotide sequence ID" value="NM_007671.4"/>
</dbReference>
<dbReference type="SMR" id="Q60772"/>
<dbReference type="BioGRID" id="198656">
    <property type="interactions" value="2"/>
</dbReference>
<dbReference type="CORUM" id="Q60772"/>
<dbReference type="DIP" id="DIP-60250N"/>
<dbReference type="FunCoup" id="Q60772">
    <property type="interactions" value="1854"/>
</dbReference>
<dbReference type="IntAct" id="Q60772">
    <property type="interactions" value="1"/>
</dbReference>
<dbReference type="STRING" id="10090.ENSMUSP00000095534"/>
<dbReference type="iPTMnet" id="Q60772"/>
<dbReference type="PhosphoSitePlus" id="Q60772"/>
<dbReference type="PaxDb" id="10090-ENSMUSP00000095534"/>
<dbReference type="PeptideAtlas" id="Q60772"/>
<dbReference type="ProteomicsDB" id="281522"/>
<dbReference type="Pumba" id="Q60772"/>
<dbReference type="Antibodypedia" id="3941">
    <property type="antibodies" value="568 antibodies from 36 providers"/>
</dbReference>
<dbReference type="DNASU" id="12580"/>
<dbReference type="Ensembl" id="ENSMUST00000063531.5">
    <property type="protein sequence ID" value="ENSMUSP00000070313.5"/>
    <property type="gene ID" value="ENSMUSG00000028551.15"/>
</dbReference>
<dbReference type="Ensembl" id="ENSMUST00000097921.10">
    <property type="protein sequence ID" value="ENSMUSP00000095534.4"/>
    <property type="gene ID" value="ENSMUSG00000028551.15"/>
</dbReference>
<dbReference type="GeneID" id="12580"/>
<dbReference type="KEGG" id="mmu:12580"/>
<dbReference type="UCSC" id="uc008ucr.1">
    <property type="organism name" value="mouse"/>
</dbReference>
<dbReference type="AGR" id="MGI:105388"/>
<dbReference type="CTD" id="1031"/>
<dbReference type="MGI" id="MGI:105388">
    <property type="gene designation" value="Cdkn2c"/>
</dbReference>
<dbReference type="VEuPathDB" id="HostDB:ENSMUSG00000028551"/>
<dbReference type="eggNOG" id="KOG0504">
    <property type="taxonomic scope" value="Eukaryota"/>
</dbReference>
<dbReference type="GeneTree" id="ENSGT00940000160194"/>
<dbReference type="HOGENOM" id="CLU_000134_37_0_1"/>
<dbReference type="InParanoid" id="Q60772"/>
<dbReference type="OMA" id="MAEPLGN"/>
<dbReference type="OrthoDB" id="21416at2759"/>
<dbReference type="PhylomeDB" id="Q60772"/>
<dbReference type="TreeFam" id="TF333311"/>
<dbReference type="BioGRID-ORCS" id="12580">
    <property type="hits" value="2 hits in 81 CRISPR screens"/>
</dbReference>
<dbReference type="PRO" id="PR:Q60772"/>
<dbReference type="Proteomes" id="UP000000589">
    <property type="component" value="Chromosome 4"/>
</dbReference>
<dbReference type="RNAct" id="Q60772">
    <property type="molecule type" value="protein"/>
</dbReference>
<dbReference type="Bgee" id="ENSMUSG00000028551">
    <property type="expression patterns" value="Expressed in spermatocyte and 207 other cell types or tissues"/>
</dbReference>
<dbReference type="GO" id="GO:0005737">
    <property type="term" value="C:cytoplasm"/>
    <property type="evidence" value="ECO:0007669"/>
    <property type="project" value="Ensembl"/>
</dbReference>
<dbReference type="GO" id="GO:0005634">
    <property type="term" value="C:nucleus"/>
    <property type="evidence" value="ECO:0007669"/>
    <property type="project" value="Ensembl"/>
</dbReference>
<dbReference type="GO" id="GO:0004861">
    <property type="term" value="F:cyclin-dependent protein serine/threonine kinase inhibitor activity"/>
    <property type="evidence" value="ECO:0000314"/>
    <property type="project" value="MGI"/>
</dbReference>
<dbReference type="GO" id="GO:0019901">
    <property type="term" value="F:protein kinase binding"/>
    <property type="evidence" value="ECO:0000353"/>
    <property type="project" value="MGI"/>
</dbReference>
<dbReference type="GO" id="GO:0008283">
    <property type="term" value="P:cell population proliferation"/>
    <property type="evidence" value="ECO:0000316"/>
    <property type="project" value="MGI"/>
</dbReference>
<dbReference type="GO" id="GO:0030308">
    <property type="term" value="P:negative regulation of cell growth"/>
    <property type="evidence" value="ECO:0007669"/>
    <property type="project" value="Ensembl"/>
</dbReference>
<dbReference type="GO" id="GO:2000647">
    <property type="term" value="P:negative regulation of stem cell proliferation"/>
    <property type="evidence" value="ECO:0000316"/>
    <property type="project" value="MGI"/>
</dbReference>
<dbReference type="GO" id="GO:0048709">
    <property type="term" value="P:oligodendrocyte differentiation"/>
    <property type="evidence" value="ECO:0007669"/>
    <property type="project" value="Ensembl"/>
</dbReference>
<dbReference type="GO" id="GO:2000045">
    <property type="term" value="P:regulation of G1/S transition of mitotic cell cycle"/>
    <property type="evidence" value="ECO:0007669"/>
    <property type="project" value="Ensembl"/>
</dbReference>
<dbReference type="GO" id="GO:0072089">
    <property type="term" value="P:stem cell proliferation"/>
    <property type="evidence" value="ECO:0000316"/>
    <property type="project" value="MGI"/>
</dbReference>
<dbReference type="FunFam" id="1.25.40.20:FF:000148">
    <property type="entry name" value="cyclin-dependent kinase 4 inhibitor C"/>
    <property type="match status" value="1"/>
</dbReference>
<dbReference type="Gene3D" id="1.25.40.20">
    <property type="entry name" value="Ankyrin repeat-containing domain"/>
    <property type="match status" value="1"/>
</dbReference>
<dbReference type="InterPro" id="IPR050776">
    <property type="entry name" value="Ank_Repeat/CDKN_Inhibitor"/>
</dbReference>
<dbReference type="InterPro" id="IPR002110">
    <property type="entry name" value="Ankyrin_rpt"/>
</dbReference>
<dbReference type="InterPro" id="IPR036770">
    <property type="entry name" value="Ankyrin_rpt-contain_sf"/>
</dbReference>
<dbReference type="PANTHER" id="PTHR24201">
    <property type="entry name" value="ANK_REP_REGION DOMAIN-CONTAINING PROTEIN"/>
    <property type="match status" value="1"/>
</dbReference>
<dbReference type="PANTHER" id="PTHR24201:SF9">
    <property type="entry name" value="CYCLIN-DEPENDENT KINASE 4 INHIBITOR C"/>
    <property type="match status" value="1"/>
</dbReference>
<dbReference type="Pfam" id="PF12796">
    <property type="entry name" value="Ank_2"/>
    <property type="match status" value="1"/>
</dbReference>
<dbReference type="Pfam" id="PF13637">
    <property type="entry name" value="Ank_4"/>
    <property type="match status" value="1"/>
</dbReference>
<dbReference type="SMART" id="SM00248">
    <property type="entry name" value="ANK"/>
    <property type="match status" value="4"/>
</dbReference>
<dbReference type="SUPFAM" id="SSF48403">
    <property type="entry name" value="Ankyrin repeat"/>
    <property type="match status" value="1"/>
</dbReference>
<dbReference type="PROSITE" id="PS50297">
    <property type="entry name" value="ANK_REP_REGION"/>
    <property type="match status" value="1"/>
</dbReference>
<dbReference type="PROSITE" id="PS50088">
    <property type="entry name" value="ANK_REPEAT"/>
    <property type="match status" value="2"/>
</dbReference>
<evidence type="ECO:0000250" key="1"/>
<evidence type="ECO:0000305" key="2"/>
<gene>
    <name type="primary">Cdkn2c</name>
</gene>
<organism>
    <name type="scientific">Mus musculus</name>
    <name type="common">Mouse</name>
    <dbReference type="NCBI Taxonomy" id="10090"/>
    <lineage>
        <taxon>Eukaryota</taxon>
        <taxon>Metazoa</taxon>
        <taxon>Chordata</taxon>
        <taxon>Craniata</taxon>
        <taxon>Vertebrata</taxon>
        <taxon>Euteleostomi</taxon>
        <taxon>Mammalia</taxon>
        <taxon>Eutheria</taxon>
        <taxon>Euarchontoglires</taxon>
        <taxon>Glires</taxon>
        <taxon>Rodentia</taxon>
        <taxon>Myomorpha</taxon>
        <taxon>Muroidea</taxon>
        <taxon>Muridae</taxon>
        <taxon>Murinae</taxon>
        <taxon>Mus</taxon>
        <taxon>Mus</taxon>
    </lineage>
</organism>
<sequence length="168" mass="18066">MAEPWGNELASAAARGDLEQLTSLLQNNVNVNAQNGFGRTALQVMKLGNPEIARRLLLRGANPNLKDGTGFAVIHDAARAGFLDTVQALLEFQADVNIEDNEGNLPLHLAAKEGHLPVVEFLMKHTACNVGHRNHKGDTAFDLARFYGRNEVISLMEANGVGGATSLQ</sequence>